<protein>
    <recommendedName>
        <fullName evidence="1">UDP-N-acetylmuramate--L-alanine ligase</fullName>
        <ecNumber evidence="1">6.3.2.8</ecNumber>
    </recommendedName>
    <alternativeName>
        <fullName evidence="1">UDP-N-acetylmuramoyl-L-alanine synthetase</fullName>
    </alternativeName>
</protein>
<sequence>MYGKIRTIHFVGIGGIGMSGIAEVLLNLGYRVSGSDLRVSEITQRLCDLGGMIAYGHAAENLGDADVVVTSTAVKSDNPEVIEAHRRLIPVIPRAEMLAELMRMKYGIAVAGTHGKTTTTSMVSTVLSKSGIDPTVVIGGRLDSIGSNAKLGQGKFLVAEADESDGSFLKLSPIIAVVTNVDADHLDYYSDLDEIKRTFVDFINKIPFYGVAILCLDDPNVQALIPQVGKRFVTYGMSTQADYNAQEISYQEERTTFTVCWQGERLGQLSIRMPGQHNVLNALAAVAVARELEIPFEQIAEAFCDFCGVQRRFQPKYQGRDIMVVDDYGHHPAEIKVTLAAACSGWNRRVVAVFQPHRYSRTQALFDEFVTAFYQADHLVVMDIYAAGETPIPGVEARLLAEGIAGHGHRDVHYCPDAEAVAAHLREVVQAGDLVLTLGAGNVWQIGEALAEWLQQRD</sequence>
<feature type="chain" id="PRO_0000242572" description="UDP-N-acetylmuramate--L-alanine ligase">
    <location>
        <begin position="1"/>
        <end position="458"/>
    </location>
</feature>
<feature type="binding site" evidence="1">
    <location>
        <begin position="112"/>
        <end position="118"/>
    </location>
    <ligand>
        <name>ATP</name>
        <dbReference type="ChEBI" id="CHEBI:30616"/>
    </ligand>
</feature>
<gene>
    <name evidence="1" type="primary">murC</name>
    <name type="ordered locus">Pcar_2201</name>
</gene>
<name>MURC_SYNC1</name>
<keyword id="KW-0067">ATP-binding</keyword>
<keyword id="KW-0131">Cell cycle</keyword>
<keyword id="KW-0132">Cell division</keyword>
<keyword id="KW-0133">Cell shape</keyword>
<keyword id="KW-0961">Cell wall biogenesis/degradation</keyword>
<keyword id="KW-0963">Cytoplasm</keyword>
<keyword id="KW-0436">Ligase</keyword>
<keyword id="KW-0547">Nucleotide-binding</keyword>
<keyword id="KW-0573">Peptidoglycan synthesis</keyword>
<keyword id="KW-1185">Reference proteome</keyword>
<accession>Q3A2G7</accession>
<evidence type="ECO:0000255" key="1">
    <source>
        <dbReference type="HAMAP-Rule" id="MF_00046"/>
    </source>
</evidence>
<dbReference type="EC" id="6.3.2.8" evidence="1"/>
<dbReference type="EMBL" id="CP000142">
    <property type="protein sequence ID" value="ABA89440.1"/>
    <property type="molecule type" value="Genomic_DNA"/>
</dbReference>
<dbReference type="RefSeq" id="WP_011341955.1">
    <property type="nucleotide sequence ID" value="NC_007498.2"/>
</dbReference>
<dbReference type="SMR" id="Q3A2G7"/>
<dbReference type="STRING" id="338963.Pcar_2201"/>
<dbReference type="KEGG" id="pca:Pcar_2201"/>
<dbReference type="eggNOG" id="COG0773">
    <property type="taxonomic scope" value="Bacteria"/>
</dbReference>
<dbReference type="HOGENOM" id="CLU_028104_2_2_7"/>
<dbReference type="OrthoDB" id="9804126at2"/>
<dbReference type="UniPathway" id="UPA00219"/>
<dbReference type="Proteomes" id="UP000002534">
    <property type="component" value="Chromosome"/>
</dbReference>
<dbReference type="GO" id="GO:0005737">
    <property type="term" value="C:cytoplasm"/>
    <property type="evidence" value="ECO:0007669"/>
    <property type="project" value="UniProtKB-SubCell"/>
</dbReference>
<dbReference type="GO" id="GO:0005524">
    <property type="term" value="F:ATP binding"/>
    <property type="evidence" value="ECO:0007669"/>
    <property type="project" value="UniProtKB-UniRule"/>
</dbReference>
<dbReference type="GO" id="GO:0008763">
    <property type="term" value="F:UDP-N-acetylmuramate-L-alanine ligase activity"/>
    <property type="evidence" value="ECO:0007669"/>
    <property type="project" value="UniProtKB-UniRule"/>
</dbReference>
<dbReference type="GO" id="GO:0051301">
    <property type="term" value="P:cell division"/>
    <property type="evidence" value="ECO:0007669"/>
    <property type="project" value="UniProtKB-KW"/>
</dbReference>
<dbReference type="GO" id="GO:0071555">
    <property type="term" value="P:cell wall organization"/>
    <property type="evidence" value="ECO:0007669"/>
    <property type="project" value="UniProtKB-KW"/>
</dbReference>
<dbReference type="GO" id="GO:0009252">
    <property type="term" value="P:peptidoglycan biosynthetic process"/>
    <property type="evidence" value="ECO:0007669"/>
    <property type="project" value="UniProtKB-UniRule"/>
</dbReference>
<dbReference type="GO" id="GO:0008360">
    <property type="term" value="P:regulation of cell shape"/>
    <property type="evidence" value="ECO:0007669"/>
    <property type="project" value="UniProtKB-KW"/>
</dbReference>
<dbReference type="Gene3D" id="3.90.190.20">
    <property type="entry name" value="Mur ligase, C-terminal domain"/>
    <property type="match status" value="1"/>
</dbReference>
<dbReference type="Gene3D" id="3.40.1190.10">
    <property type="entry name" value="Mur-like, catalytic domain"/>
    <property type="match status" value="1"/>
</dbReference>
<dbReference type="Gene3D" id="3.40.50.720">
    <property type="entry name" value="NAD(P)-binding Rossmann-like Domain"/>
    <property type="match status" value="1"/>
</dbReference>
<dbReference type="HAMAP" id="MF_00046">
    <property type="entry name" value="MurC"/>
    <property type="match status" value="1"/>
</dbReference>
<dbReference type="InterPro" id="IPR036565">
    <property type="entry name" value="Mur-like_cat_sf"/>
</dbReference>
<dbReference type="InterPro" id="IPR004101">
    <property type="entry name" value="Mur_ligase_C"/>
</dbReference>
<dbReference type="InterPro" id="IPR036615">
    <property type="entry name" value="Mur_ligase_C_dom_sf"/>
</dbReference>
<dbReference type="InterPro" id="IPR013221">
    <property type="entry name" value="Mur_ligase_cen"/>
</dbReference>
<dbReference type="InterPro" id="IPR000713">
    <property type="entry name" value="Mur_ligase_N"/>
</dbReference>
<dbReference type="InterPro" id="IPR050061">
    <property type="entry name" value="MurCDEF_pg_biosynth"/>
</dbReference>
<dbReference type="InterPro" id="IPR005758">
    <property type="entry name" value="UDP-N-AcMur_Ala_ligase_MurC"/>
</dbReference>
<dbReference type="NCBIfam" id="TIGR01082">
    <property type="entry name" value="murC"/>
    <property type="match status" value="1"/>
</dbReference>
<dbReference type="PANTHER" id="PTHR43445:SF3">
    <property type="entry name" value="UDP-N-ACETYLMURAMATE--L-ALANINE LIGASE"/>
    <property type="match status" value="1"/>
</dbReference>
<dbReference type="PANTHER" id="PTHR43445">
    <property type="entry name" value="UDP-N-ACETYLMURAMATE--L-ALANINE LIGASE-RELATED"/>
    <property type="match status" value="1"/>
</dbReference>
<dbReference type="Pfam" id="PF01225">
    <property type="entry name" value="Mur_ligase"/>
    <property type="match status" value="1"/>
</dbReference>
<dbReference type="Pfam" id="PF02875">
    <property type="entry name" value="Mur_ligase_C"/>
    <property type="match status" value="1"/>
</dbReference>
<dbReference type="Pfam" id="PF08245">
    <property type="entry name" value="Mur_ligase_M"/>
    <property type="match status" value="1"/>
</dbReference>
<dbReference type="SUPFAM" id="SSF51984">
    <property type="entry name" value="MurCD N-terminal domain"/>
    <property type="match status" value="1"/>
</dbReference>
<dbReference type="SUPFAM" id="SSF53623">
    <property type="entry name" value="MurD-like peptide ligases, catalytic domain"/>
    <property type="match status" value="1"/>
</dbReference>
<dbReference type="SUPFAM" id="SSF53244">
    <property type="entry name" value="MurD-like peptide ligases, peptide-binding domain"/>
    <property type="match status" value="1"/>
</dbReference>
<organism>
    <name type="scientific">Syntrophotalea carbinolica (strain DSM 2380 / NBRC 103641 / GraBd1)</name>
    <name type="common">Pelobacter carbinolicus</name>
    <dbReference type="NCBI Taxonomy" id="338963"/>
    <lineage>
        <taxon>Bacteria</taxon>
        <taxon>Pseudomonadati</taxon>
        <taxon>Thermodesulfobacteriota</taxon>
        <taxon>Desulfuromonadia</taxon>
        <taxon>Desulfuromonadales</taxon>
        <taxon>Syntrophotaleaceae</taxon>
        <taxon>Syntrophotalea</taxon>
    </lineage>
</organism>
<reference key="1">
    <citation type="submission" date="2005-10" db="EMBL/GenBank/DDBJ databases">
        <title>Complete sequence of Pelobacter carbinolicus DSM 2380.</title>
        <authorList>
            <person name="Copeland A."/>
            <person name="Lucas S."/>
            <person name="Lapidus A."/>
            <person name="Barry K."/>
            <person name="Detter J.C."/>
            <person name="Glavina T."/>
            <person name="Hammon N."/>
            <person name="Israni S."/>
            <person name="Pitluck S."/>
            <person name="Chertkov O."/>
            <person name="Schmutz J."/>
            <person name="Larimer F."/>
            <person name="Land M."/>
            <person name="Kyrpides N."/>
            <person name="Ivanova N."/>
            <person name="Richardson P."/>
        </authorList>
    </citation>
    <scope>NUCLEOTIDE SEQUENCE [LARGE SCALE GENOMIC DNA]</scope>
    <source>
        <strain>DSM 2380 / NBRC 103641 / GraBd1</strain>
    </source>
</reference>
<proteinExistence type="inferred from homology"/>
<comment type="function">
    <text evidence="1">Cell wall formation.</text>
</comment>
<comment type="catalytic activity">
    <reaction evidence="1">
        <text>UDP-N-acetyl-alpha-D-muramate + L-alanine + ATP = UDP-N-acetyl-alpha-D-muramoyl-L-alanine + ADP + phosphate + H(+)</text>
        <dbReference type="Rhea" id="RHEA:23372"/>
        <dbReference type="ChEBI" id="CHEBI:15378"/>
        <dbReference type="ChEBI" id="CHEBI:30616"/>
        <dbReference type="ChEBI" id="CHEBI:43474"/>
        <dbReference type="ChEBI" id="CHEBI:57972"/>
        <dbReference type="ChEBI" id="CHEBI:70757"/>
        <dbReference type="ChEBI" id="CHEBI:83898"/>
        <dbReference type="ChEBI" id="CHEBI:456216"/>
        <dbReference type="EC" id="6.3.2.8"/>
    </reaction>
</comment>
<comment type="pathway">
    <text evidence="1">Cell wall biogenesis; peptidoglycan biosynthesis.</text>
</comment>
<comment type="subcellular location">
    <subcellularLocation>
        <location evidence="1">Cytoplasm</location>
    </subcellularLocation>
</comment>
<comment type="similarity">
    <text evidence="1">Belongs to the MurCDEF family.</text>
</comment>